<organismHost>
    <name type="scientific">Equus caballus</name>
    <name type="common">Horse</name>
    <dbReference type="NCBI Taxonomy" id="9796"/>
</organismHost>
<feature type="chain" id="PRO_0000406037" description="Protein UL24 homolog">
    <location>
        <begin position="1"/>
        <end position="237"/>
    </location>
</feature>
<proteinExistence type="inferred from homology"/>
<accession>Q66623</accession>
<gene>
    <name type="primary">20</name>
</gene>
<organism>
    <name type="scientific">Equine herpesvirus 2 (strain 86/87)</name>
    <name type="common">EHV-2</name>
    <dbReference type="NCBI Taxonomy" id="82831"/>
    <lineage>
        <taxon>Viruses</taxon>
        <taxon>Duplodnaviria</taxon>
        <taxon>Heunggongvirae</taxon>
        <taxon>Peploviricota</taxon>
        <taxon>Herviviricetes</taxon>
        <taxon>Herpesvirales</taxon>
        <taxon>Orthoherpesviridae</taxon>
        <taxon>Gammaherpesvirinae</taxon>
        <taxon>Percavirus</taxon>
        <taxon>Percavirus equidgamma2</taxon>
        <taxon>Equid gammaherpesvirus 2</taxon>
    </lineage>
</organism>
<comment type="similarity">
    <text evidence="1">Belongs to the herpesviridae UL24 family.</text>
</comment>
<evidence type="ECO:0000305" key="1"/>
<reference key="1">
    <citation type="journal article" date="1995" name="J. Mol. Biol.">
        <title>The DNA sequence of equine herpesvirus 2.</title>
        <authorList>
            <person name="Telford E.A.R."/>
            <person name="Watson M.S."/>
            <person name="Aird H.C."/>
            <person name="Perry J."/>
            <person name="Davison A.J."/>
        </authorList>
    </citation>
    <scope>NUCLEOTIDE SEQUENCE [LARGE SCALE GENOMIC DNA]</scope>
</reference>
<reference key="2">
    <citation type="submission" date="2015-01" db="EMBL/GenBank/DDBJ databases">
        <authorList>
            <person name="Davison A.J."/>
        </authorList>
    </citation>
    <scope>SEQUENCE REVISION</scope>
</reference>
<name>UL24_EHV2</name>
<keyword id="KW-1185">Reference proteome</keyword>
<sequence length="237" mass="27128">MALNFKADTSALSRLPTKRKLAGQKAHLEMYRKLAKYSSVGHLLKFLAIDHPCPTRCQLKIFFEVCLGNRIADCVILLSCGETRLCYIIELKTCMSDSPSMYNETRLCQRSQGLCQLSDALRFISFNAPAGRQKWHLVPHLIFKSQRGLKTIYTETPQFPTNIIHSSPDKLASFFFSRADREVSEKVHAPDAGGQEKMAAKRRLLVPKSKALRARRQRLIERNKKACFKSQEKRARR</sequence>
<protein>
    <recommendedName>
        <fullName>Protein UL24 homolog</fullName>
    </recommendedName>
</protein>
<dbReference type="EMBL" id="U20824">
    <property type="protein sequence ID" value="AAC13807.2"/>
    <property type="molecule type" value="Genomic_DNA"/>
</dbReference>
<dbReference type="PIR" id="S55614">
    <property type="entry name" value="S55614"/>
</dbReference>
<dbReference type="KEGG" id="vg:1461013"/>
<dbReference type="Proteomes" id="UP000007083">
    <property type="component" value="Segment"/>
</dbReference>
<dbReference type="InterPro" id="IPR002580">
    <property type="entry name" value="Herpes_UL24"/>
</dbReference>
<dbReference type="Pfam" id="PF01646">
    <property type="entry name" value="Herpes_UL24"/>
    <property type="match status" value="1"/>
</dbReference>